<dbReference type="EMBL" id="CP001120">
    <property type="protein sequence ID" value="ACF69956.1"/>
    <property type="molecule type" value="Genomic_DNA"/>
</dbReference>
<dbReference type="RefSeq" id="WP_000003370.1">
    <property type="nucleotide sequence ID" value="NC_011083.1"/>
</dbReference>
<dbReference type="SMR" id="B4T994"/>
<dbReference type="KEGG" id="seh:SeHA_C4026"/>
<dbReference type="HOGENOM" id="CLU_111574_1_0_6"/>
<dbReference type="Proteomes" id="UP000001866">
    <property type="component" value="Chromosome"/>
</dbReference>
<dbReference type="GO" id="GO:0005737">
    <property type="term" value="C:cytoplasm"/>
    <property type="evidence" value="ECO:0007669"/>
    <property type="project" value="UniProtKB-SubCell"/>
</dbReference>
<dbReference type="GO" id="GO:0051082">
    <property type="term" value="F:unfolded protein binding"/>
    <property type="evidence" value="ECO:0007669"/>
    <property type="project" value="InterPro"/>
</dbReference>
<dbReference type="GO" id="GO:0006457">
    <property type="term" value="P:protein folding"/>
    <property type="evidence" value="ECO:0007669"/>
    <property type="project" value="UniProtKB-UniRule"/>
</dbReference>
<dbReference type="GO" id="GO:0051262">
    <property type="term" value="P:protein tetramerization"/>
    <property type="evidence" value="ECO:0007669"/>
    <property type="project" value="InterPro"/>
</dbReference>
<dbReference type="GO" id="GO:0015031">
    <property type="term" value="P:protein transport"/>
    <property type="evidence" value="ECO:0007669"/>
    <property type="project" value="UniProtKB-UniRule"/>
</dbReference>
<dbReference type="CDD" id="cd00557">
    <property type="entry name" value="Translocase_SecB"/>
    <property type="match status" value="1"/>
</dbReference>
<dbReference type="FunFam" id="3.10.420.10:FF:000001">
    <property type="entry name" value="Protein-export chaperone SecB"/>
    <property type="match status" value="1"/>
</dbReference>
<dbReference type="Gene3D" id="3.10.420.10">
    <property type="entry name" value="SecB-like"/>
    <property type="match status" value="1"/>
</dbReference>
<dbReference type="HAMAP" id="MF_00821">
    <property type="entry name" value="SecB"/>
    <property type="match status" value="1"/>
</dbReference>
<dbReference type="InterPro" id="IPR003708">
    <property type="entry name" value="SecB"/>
</dbReference>
<dbReference type="InterPro" id="IPR035958">
    <property type="entry name" value="SecB-like_sf"/>
</dbReference>
<dbReference type="NCBIfam" id="NF004390">
    <property type="entry name" value="PRK05751.1-1"/>
    <property type="match status" value="1"/>
</dbReference>
<dbReference type="NCBIfam" id="NF004393">
    <property type="entry name" value="PRK05751.1-4"/>
    <property type="match status" value="1"/>
</dbReference>
<dbReference type="NCBIfam" id="TIGR00809">
    <property type="entry name" value="secB"/>
    <property type="match status" value="1"/>
</dbReference>
<dbReference type="PANTHER" id="PTHR36918">
    <property type="match status" value="1"/>
</dbReference>
<dbReference type="PANTHER" id="PTHR36918:SF1">
    <property type="entry name" value="PROTEIN-EXPORT PROTEIN SECB"/>
    <property type="match status" value="1"/>
</dbReference>
<dbReference type="Pfam" id="PF02556">
    <property type="entry name" value="SecB"/>
    <property type="match status" value="1"/>
</dbReference>
<dbReference type="PRINTS" id="PR01594">
    <property type="entry name" value="SECBCHAPRONE"/>
</dbReference>
<dbReference type="SUPFAM" id="SSF54611">
    <property type="entry name" value="SecB-like"/>
    <property type="match status" value="1"/>
</dbReference>
<gene>
    <name evidence="1" type="primary">secB</name>
    <name type="ordered locus">SeHA_C4026</name>
</gene>
<accession>B4T994</accession>
<organism>
    <name type="scientific">Salmonella heidelberg (strain SL476)</name>
    <dbReference type="NCBI Taxonomy" id="454169"/>
    <lineage>
        <taxon>Bacteria</taxon>
        <taxon>Pseudomonadati</taxon>
        <taxon>Pseudomonadota</taxon>
        <taxon>Gammaproteobacteria</taxon>
        <taxon>Enterobacterales</taxon>
        <taxon>Enterobacteriaceae</taxon>
        <taxon>Salmonella</taxon>
    </lineage>
</organism>
<reference key="1">
    <citation type="journal article" date="2011" name="J. Bacteriol.">
        <title>Comparative genomics of 28 Salmonella enterica isolates: evidence for CRISPR-mediated adaptive sublineage evolution.</title>
        <authorList>
            <person name="Fricke W.F."/>
            <person name="Mammel M.K."/>
            <person name="McDermott P.F."/>
            <person name="Tartera C."/>
            <person name="White D.G."/>
            <person name="Leclerc J.E."/>
            <person name="Ravel J."/>
            <person name="Cebula T.A."/>
        </authorList>
    </citation>
    <scope>NUCLEOTIDE SEQUENCE [LARGE SCALE GENOMIC DNA]</scope>
    <source>
        <strain>SL476</strain>
    </source>
</reference>
<feature type="chain" id="PRO_1000195343" description="Protein-export protein SecB">
    <location>
        <begin position="1"/>
        <end position="155"/>
    </location>
</feature>
<proteinExistence type="inferred from homology"/>
<protein>
    <recommendedName>
        <fullName evidence="1">Protein-export protein SecB</fullName>
    </recommendedName>
</protein>
<sequence>MSEQNNTEMAFQIQRIYTKDVSFEAPNAPHVFQKDWQPEVKLDLDTASSQLADDVYEVVLRVTVTASLGEETAFLCEVQQAGIFSISGIEGTQMAHCLGAYCPNILFPYARECITSLVSRGTFPQLNLAPVNFDALFMNYLQQQAGEGTEEHQDA</sequence>
<comment type="function">
    <text evidence="1">One of the proteins required for the normal export of preproteins out of the cell cytoplasm. It is a molecular chaperone that binds to a subset of precursor proteins, maintaining them in a translocation-competent state. It also specifically binds to its receptor SecA.</text>
</comment>
<comment type="subunit">
    <text evidence="1">Homotetramer, a dimer of dimers. One homotetramer interacts with 1 SecA dimer.</text>
</comment>
<comment type="subcellular location">
    <subcellularLocation>
        <location evidence="1">Cytoplasm</location>
    </subcellularLocation>
</comment>
<comment type="similarity">
    <text evidence="1">Belongs to the SecB family.</text>
</comment>
<evidence type="ECO:0000255" key="1">
    <source>
        <dbReference type="HAMAP-Rule" id="MF_00821"/>
    </source>
</evidence>
<name>SECB_SALHS</name>
<keyword id="KW-0143">Chaperone</keyword>
<keyword id="KW-0963">Cytoplasm</keyword>
<keyword id="KW-0653">Protein transport</keyword>
<keyword id="KW-0811">Translocation</keyword>
<keyword id="KW-0813">Transport</keyword>